<accession>A1UZE5</accession>
<protein>
    <recommendedName>
        <fullName evidence="1">2-aminoethylphosphonate--pyruvate transaminase</fullName>
        <ecNumber evidence="1">2.6.1.37</ecNumber>
    </recommendedName>
    <alternativeName>
        <fullName evidence="1">2-aminoethylphosphonate aminotransferase</fullName>
    </alternativeName>
    <alternativeName>
        <fullName evidence="1">AEP transaminase</fullName>
        <shortName evidence="1">AEPT</shortName>
    </alternativeName>
</protein>
<keyword id="KW-0032">Aminotransferase</keyword>
<keyword id="KW-0663">Pyridoxal phosphate</keyword>
<keyword id="KW-0670">Pyruvate</keyword>
<keyword id="KW-0808">Transferase</keyword>
<gene>
    <name evidence="1" type="primary">phnW</name>
    <name type="ordered locus">BMASAVP1_1756</name>
</gene>
<evidence type="ECO:0000255" key="1">
    <source>
        <dbReference type="HAMAP-Rule" id="MF_01376"/>
    </source>
</evidence>
<sequence>MPERDPILLTPGPLTTSRMTRDAMLRDWGSWDAAFNRLTKSVCADLVRIAGGGDAYVCVPLQGSGTFAVEATLGTLVPRDARVLVPNNGAYCARIAAILRRLGIAHVELPFAEDEPASAHAIDAALARDARLTHVALVHLETSAGLLNPLDDIAAVCRARGRALIVDAMSSFGALPIALAASGIDALISASGKCLEGVPGMGFAIVRRSALEAAEGRSPSVALDLHDQYAYMQRTSQWRFTPPTHVLAALRAALDQFFDEGGQPARGARYARNCATLVDGMRALGFEPFLDARAQASVIVTFYAPADPAYAFPAFYAAVRDAGYVLYPGKLTTADTFRVGCIGALGADEMRGAVAAIGGALESLGIAMR</sequence>
<feature type="chain" id="PRO_1000068245" description="2-aminoethylphosphonate--pyruvate transaminase">
    <location>
        <begin position="1"/>
        <end position="369"/>
    </location>
</feature>
<feature type="modified residue" description="N6-(pyridoxal phosphate)lysine" evidence="1">
    <location>
        <position position="193"/>
    </location>
</feature>
<reference key="1">
    <citation type="journal article" date="2010" name="Genome Biol. Evol.">
        <title>Continuing evolution of Burkholderia mallei through genome reduction and large-scale rearrangements.</title>
        <authorList>
            <person name="Losada L."/>
            <person name="Ronning C.M."/>
            <person name="DeShazer D."/>
            <person name="Woods D."/>
            <person name="Fedorova N."/>
            <person name="Kim H.S."/>
            <person name="Shabalina S.A."/>
            <person name="Pearson T.R."/>
            <person name="Brinkac L."/>
            <person name="Tan P."/>
            <person name="Nandi T."/>
            <person name="Crabtree J."/>
            <person name="Badger J."/>
            <person name="Beckstrom-Sternberg S."/>
            <person name="Saqib M."/>
            <person name="Schutzer S.E."/>
            <person name="Keim P."/>
            <person name="Nierman W.C."/>
        </authorList>
    </citation>
    <scope>NUCLEOTIDE SEQUENCE [LARGE SCALE GENOMIC DNA]</scope>
    <source>
        <strain>SAVP1</strain>
    </source>
</reference>
<comment type="function">
    <text evidence="1">Involved in phosphonate degradation.</text>
</comment>
<comment type="catalytic activity">
    <reaction evidence="1">
        <text>(2-aminoethyl)phosphonate + pyruvate = phosphonoacetaldehyde + L-alanine</text>
        <dbReference type="Rhea" id="RHEA:17021"/>
        <dbReference type="ChEBI" id="CHEBI:15361"/>
        <dbReference type="ChEBI" id="CHEBI:57418"/>
        <dbReference type="ChEBI" id="CHEBI:57972"/>
        <dbReference type="ChEBI" id="CHEBI:58383"/>
        <dbReference type="EC" id="2.6.1.37"/>
    </reaction>
</comment>
<comment type="cofactor">
    <cofactor evidence="1">
        <name>pyridoxal 5'-phosphate</name>
        <dbReference type="ChEBI" id="CHEBI:597326"/>
    </cofactor>
</comment>
<comment type="subunit">
    <text evidence="1">Homodimer.</text>
</comment>
<comment type="similarity">
    <text evidence="1">Belongs to the class-V pyridoxal-phosphate-dependent aminotransferase family. PhnW subfamily.</text>
</comment>
<name>PHNW_BURMS</name>
<proteinExistence type="inferred from homology"/>
<organism>
    <name type="scientific">Burkholderia mallei (strain SAVP1)</name>
    <dbReference type="NCBI Taxonomy" id="320388"/>
    <lineage>
        <taxon>Bacteria</taxon>
        <taxon>Pseudomonadati</taxon>
        <taxon>Pseudomonadota</taxon>
        <taxon>Betaproteobacteria</taxon>
        <taxon>Burkholderiales</taxon>
        <taxon>Burkholderiaceae</taxon>
        <taxon>Burkholderia</taxon>
        <taxon>pseudomallei group</taxon>
    </lineage>
</organism>
<dbReference type="EC" id="2.6.1.37" evidence="1"/>
<dbReference type="EMBL" id="CP000525">
    <property type="protein sequence ID" value="ABM48425.1"/>
    <property type="molecule type" value="Genomic_DNA"/>
</dbReference>
<dbReference type="RefSeq" id="WP_004194610.1">
    <property type="nucleotide sequence ID" value="NC_008784.1"/>
</dbReference>
<dbReference type="SMR" id="A1UZE5"/>
<dbReference type="KEGG" id="bmv:BMASAVP1_1756"/>
<dbReference type="HOGENOM" id="CLU_027686_3_1_4"/>
<dbReference type="GO" id="GO:0047304">
    <property type="term" value="F:2-aminoethylphosphonate-pyruvate transaminase activity"/>
    <property type="evidence" value="ECO:0007669"/>
    <property type="project" value="UniProtKB-UniRule"/>
</dbReference>
<dbReference type="GO" id="GO:0019700">
    <property type="term" value="P:organic phosphonate catabolic process"/>
    <property type="evidence" value="ECO:0007669"/>
    <property type="project" value="InterPro"/>
</dbReference>
<dbReference type="Gene3D" id="3.90.1150.10">
    <property type="entry name" value="Aspartate Aminotransferase, domain 1"/>
    <property type="match status" value="1"/>
</dbReference>
<dbReference type="Gene3D" id="3.40.640.10">
    <property type="entry name" value="Type I PLP-dependent aspartate aminotransferase-like (Major domain)"/>
    <property type="match status" value="1"/>
</dbReference>
<dbReference type="HAMAP" id="MF_01376">
    <property type="entry name" value="PhnW_aminotrans_5"/>
    <property type="match status" value="1"/>
</dbReference>
<dbReference type="InterPro" id="IPR000192">
    <property type="entry name" value="Aminotrans_V_dom"/>
</dbReference>
<dbReference type="InterPro" id="IPR012703">
    <property type="entry name" value="NH2EtPonate_pyrv_transaminase"/>
</dbReference>
<dbReference type="InterPro" id="IPR015424">
    <property type="entry name" value="PyrdxlP-dep_Trfase"/>
</dbReference>
<dbReference type="InterPro" id="IPR015421">
    <property type="entry name" value="PyrdxlP-dep_Trfase_major"/>
</dbReference>
<dbReference type="InterPro" id="IPR015422">
    <property type="entry name" value="PyrdxlP-dep_Trfase_small"/>
</dbReference>
<dbReference type="InterPro" id="IPR024169">
    <property type="entry name" value="SP_NH2Trfase/AEP_transaminase"/>
</dbReference>
<dbReference type="NCBIfam" id="TIGR03301">
    <property type="entry name" value="PhnW-AepZ"/>
    <property type="match status" value="1"/>
</dbReference>
<dbReference type="NCBIfam" id="NF010006">
    <property type="entry name" value="PRK13479.1"/>
    <property type="match status" value="1"/>
</dbReference>
<dbReference type="NCBIfam" id="TIGR02326">
    <property type="entry name" value="transamin_PhnW"/>
    <property type="match status" value="1"/>
</dbReference>
<dbReference type="PANTHER" id="PTHR42778">
    <property type="entry name" value="2-AMINOETHYLPHOSPHONATE--PYRUVATE TRANSAMINASE"/>
    <property type="match status" value="1"/>
</dbReference>
<dbReference type="PANTHER" id="PTHR42778:SF1">
    <property type="entry name" value="2-AMINOETHYLPHOSPHONATE--PYRUVATE TRANSAMINASE"/>
    <property type="match status" value="1"/>
</dbReference>
<dbReference type="Pfam" id="PF00266">
    <property type="entry name" value="Aminotran_5"/>
    <property type="match status" value="1"/>
</dbReference>
<dbReference type="PIRSF" id="PIRSF000524">
    <property type="entry name" value="SPT"/>
    <property type="match status" value="1"/>
</dbReference>
<dbReference type="SUPFAM" id="SSF53383">
    <property type="entry name" value="PLP-dependent transferases"/>
    <property type="match status" value="1"/>
</dbReference>